<protein>
    <recommendedName>
        <fullName>Vicilin-like antimicrobial peptides 2-2</fullName>
    </recommendedName>
    <alternativeName>
        <fullName>MiAMP2</fullName>
    </alternativeName>
    <component>
        <recommendedName>
            <fullName evidence="6">Antimicrobial peptide 2a</fullName>
        </recommendedName>
        <alternativeName>
            <fullName evidence="7">Antimicrobial peptide Mac i 1</fullName>
        </alternativeName>
        <alternativeName>
            <fullName evidence="6">MiAMP2a</fullName>
        </alternativeName>
        <allergenName evidence="7">Mac i 1.0101 (28-76)</allergenName>
    </component>
    <component>
        <recommendedName>
            <fullName>Antimicrobial peptide 2b</fullName>
        </recommendedName>
        <alternativeName>
            <fullName>MiAMP2b</fullName>
        </alternativeName>
    </component>
    <component>
        <recommendedName>
            <fullName>Antimicrobial peptide 2c-1</fullName>
        </recommendedName>
        <alternativeName>
            <fullName>MiAMP2c-1</fullName>
        </alternativeName>
    </component>
    <component>
        <recommendedName>
            <fullName>Antimicrobial peptide 2c-2</fullName>
        </recommendedName>
        <alternativeName>
            <fullName>MiAMP2c-2</fullName>
        </alternativeName>
    </component>
    <component>
        <recommendedName>
            <fullName>Antimicrobial peptide 2c-3</fullName>
        </recommendedName>
        <alternativeName>
            <fullName>MiAMP2c-3</fullName>
        </alternativeName>
    </component>
    <component>
        <recommendedName>
            <fullName>Antimicrobial peptide 2d</fullName>
        </recommendedName>
        <alternativeName>
            <fullName>MiAMP2d</fullName>
        </alternativeName>
    </component>
</protein>
<organism>
    <name type="scientific">Macadamia integrifolia</name>
    <name type="common">Macadamia nut</name>
    <dbReference type="NCBI Taxonomy" id="60698"/>
    <lineage>
        <taxon>Eukaryota</taxon>
        <taxon>Viridiplantae</taxon>
        <taxon>Streptophyta</taxon>
        <taxon>Embryophyta</taxon>
        <taxon>Tracheophyta</taxon>
        <taxon>Spermatophyta</taxon>
        <taxon>Magnoliopsida</taxon>
        <taxon>Proteales</taxon>
        <taxon>Proteaceae</taxon>
        <taxon>Macadamia</taxon>
    </lineage>
</organism>
<proteinExistence type="evidence at protein level"/>
<keyword id="KW-0020">Allergen</keyword>
<keyword id="KW-0044">Antibiotic</keyword>
<keyword id="KW-0929">Antimicrobial</keyword>
<keyword id="KW-0295">Fungicide</keyword>
<keyword id="KW-0389">IgE-binding protein</keyword>
<keyword id="KW-0611">Plant defense</keyword>
<keyword id="KW-0964">Secreted</keyword>
<keyword id="KW-0708">Seed storage protein</keyword>
<keyword id="KW-0732">Signal</keyword>
<keyword id="KW-0758">Storage protein</keyword>
<sequence length="666" mass="78243">MAINTSNLCSLLFLLSLFLLSTTVSLAESEFDRQEYEECKRQCMQLETSGQMRRCVSQCDKRFEEDIDWSKYDNQDDPQTDCQQCQRRCRQQESGPRQQQYCQRRCKEICEEEEEYNRQRDPQQQYEQCQERCQRHETEPRHMQTCQQRCERRYEKEKRKQQKRYEEQQREDEEKYEERMKEEDNKRDPQQREYEDCRRRCEQQEPRQQYQCQRRCREQQRQHGRGGDLINPQRGGSGRYEEGEEKQSDNPYYFDERSLSTRFRTEEGHISVLENFYGRSKLLRALKNYRLVLLEANPNAFVLPTHLDADAILLVTGGRGALKMIHRDNRESYNLECGDVIRIPAGTTFYLINRDNNERLHIAKFLQTISTPGQYKEFFPAGGQNPEPYLSTFSKEILEAALNTQAERLRGVLGQQREGVIISASQEQIRELTRDDSESRRWHIRRGGESSRGPYNLFNKRPLYSNKYGQAYEVKPEDYRQLQDMDVSVFIANITQGSMMGPFFNTRSTKVVVVASGEADVEMACPHLSGRHGGRRGGKRHEEEEDVHYEQVKARLSKREAIVVPVGHPVVFVSSGNENLLLFAFGINAQNNHENFLAGRERNVLQQIEPQAMELAFAAPRKEVEELFNSQDESIFFPGPRQHQQQSSRSTKQQQPLVSILDFVGF</sequence>
<accession>Q9SPL4</accession>
<comment type="function">
    <text evidence="2">Antimicrobial peptides 2b, 2c and 2d have antibacterial and antifungal activity against a range of species.</text>
</comment>
<comment type="subcellular location">
    <subcellularLocation>
        <location evidence="1">Secreted</location>
    </subcellularLocation>
</comment>
<comment type="allergen">
    <text evidence="5">Causes an allergic reaction in human (PubMed:34525424). Binds to IgE in 60% of 5 patients allergic to macadamia nut (PubMed:34525424). Binds to IgE in 25% of 8 macadamia nut sensitized but clinically tolerant patients (PubMed:34525424). Also weakly binds to IgE in 7% of the 14 patients tested, that are allergic to peanut and/or tree nut but tolerant and not-sensitized to macadamia nut (PubMed:34525424).</text>
</comment>
<comment type="similarity">
    <text evidence="3">Belongs to the 7S seed storage protein family.</text>
</comment>
<name>AMP22_MACIN</name>
<evidence type="ECO:0000250" key="1"/>
<evidence type="ECO:0000250" key="2">
    <source>
        <dbReference type="UniProtKB" id="Q9SPL3"/>
    </source>
</evidence>
<evidence type="ECO:0000255" key="3"/>
<evidence type="ECO:0000256" key="4">
    <source>
        <dbReference type="SAM" id="MobiDB-lite"/>
    </source>
</evidence>
<evidence type="ECO:0000269" key="5">
    <source>
    </source>
</evidence>
<evidence type="ECO:0000303" key="6">
    <source>
    </source>
</evidence>
<evidence type="ECO:0000303" key="7">
    <source>
    </source>
</evidence>
<evidence type="ECO:0000312" key="8">
    <source>
        <dbReference type="EMBL" id="AAD54245.1"/>
    </source>
</evidence>
<dbReference type="EMBL" id="AF161884">
    <property type="protein sequence ID" value="AAD54245.1"/>
    <property type="molecule type" value="mRNA"/>
</dbReference>
<dbReference type="SMR" id="Q9SPL4"/>
<dbReference type="GO" id="GO:0005576">
    <property type="term" value="C:extracellular region"/>
    <property type="evidence" value="ECO:0007669"/>
    <property type="project" value="UniProtKB-SubCell"/>
</dbReference>
<dbReference type="GO" id="GO:0019863">
    <property type="term" value="F:IgE binding"/>
    <property type="evidence" value="ECO:0000314"/>
    <property type="project" value="UniProtKB"/>
</dbReference>
<dbReference type="GO" id="GO:0045735">
    <property type="term" value="F:nutrient reservoir activity"/>
    <property type="evidence" value="ECO:0007669"/>
    <property type="project" value="UniProtKB-KW"/>
</dbReference>
<dbReference type="GO" id="GO:0042742">
    <property type="term" value="P:defense response to bacterium"/>
    <property type="evidence" value="ECO:0007669"/>
    <property type="project" value="UniProtKB-KW"/>
</dbReference>
<dbReference type="GO" id="GO:0050832">
    <property type="term" value="P:defense response to fungus"/>
    <property type="evidence" value="ECO:0000250"/>
    <property type="project" value="UniProtKB"/>
</dbReference>
<dbReference type="GO" id="GO:0031640">
    <property type="term" value="P:killing of cells of another organism"/>
    <property type="evidence" value="ECO:0007669"/>
    <property type="project" value="UniProtKB-KW"/>
</dbReference>
<dbReference type="CDD" id="cd02245">
    <property type="entry name" value="cupin_7S_vicilin-like_C"/>
    <property type="match status" value="1"/>
</dbReference>
<dbReference type="CDD" id="cd02244">
    <property type="entry name" value="cupin_7S_vicilin-like_N"/>
    <property type="match status" value="1"/>
</dbReference>
<dbReference type="FunFam" id="2.60.120.10:FF:000173">
    <property type="entry name" value="Vicilin-like antimicrobial peptides 2-3"/>
    <property type="match status" value="1"/>
</dbReference>
<dbReference type="Gene3D" id="6.10.250.890">
    <property type="match status" value="1"/>
</dbReference>
<dbReference type="Gene3D" id="2.60.120.10">
    <property type="entry name" value="Jelly Rolls"/>
    <property type="match status" value="2"/>
</dbReference>
<dbReference type="InterPro" id="IPR006045">
    <property type="entry name" value="Cupin_1"/>
</dbReference>
<dbReference type="InterPro" id="IPR014710">
    <property type="entry name" value="RmlC-like_jellyroll"/>
</dbReference>
<dbReference type="InterPro" id="IPR011051">
    <property type="entry name" value="RmlC_Cupin_sf"/>
</dbReference>
<dbReference type="InterPro" id="IPR050253">
    <property type="entry name" value="Seed_Storage-Functional"/>
</dbReference>
<dbReference type="InterPro" id="IPR006792">
    <property type="entry name" value="Vicilin_N"/>
</dbReference>
<dbReference type="PANTHER" id="PTHR31189:SF13">
    <property type="entry name" value="CUPINCIN"/>
    <property type="match status" value="1"/>
</dbReference>
<dbReference type="PANTHER" id="PTHR31189">
    <property type="entry name" value="OS03G0336100 PROTEIN-RELATED"/>
    <property type="match status" value="1"/>
</dbReference>
<dbReference type="Pfam" id="PF00190">
    <property type="entry name" value="Cupin_1"/>
    <property type="match status" value="2"/>
</dbReference>
<dbReference type="Pfam" id="PF04702">
    <property type="entry name" value="Vicilin_N"/>
    <property type="match status" value="2"/>
</dbReference>
<dbReference type="SMART" id="SM00835">
    <property type="entry name" value="Cupin_1"/>
    <property type="match status" value="2"/>
</dbReference>
<dbReference type="SUPFAM" id="SSF51182">
    <property type="entry name" value="RmlC-like cupins"/>
    <property type="match status" value="2"/>
</dbReference>
<feature type="signal peptide" evidence="3">
    <location>
        <begin position="1"/>
        <end position="27"/>
    </location>
</feature>
<feature type="chain" id="PRO_0000250395" description="Vicilin-like antimicrobial peptides 2-2" evidence="3">
    <location>
        <begin position="28"/>
        <end position="666"/>
    </location>
</feature>
<feature type="peptide" id="PRO_0000250396" description="Antimicrobial peptide 2a" evidence="3 6">
    <location>
        <begin position="28"/>
        <end position="76"/>
    </location>
</feature>
<feature type="peptide" id="PRO_0000250397" description="Antimicrobial peptide 2b" evidence="2">
    <location>
        <begin position="77"/>
        <end position="117"/>
    </location>
</feature>
<feature type="peptide" id="PRO_0000250398" description="Antimicrobial peptide 2c-3" evidence="2">
    <location>
        <begin position="118"/>
        <end position="184"/>
    </location>
</feature>
<feature type="peptide" id="PRO_0000250399" description="Antimicrobial peptide 2c-2" evidence="2">
    <location>
        <begin position="118"/>
        <end position="164"/>
    </location>
</feature>
<feature type="peptide" id="PRO_0000250400" description="Antimicrobial peptide 2c-1" evidence="2">
    <location>
        <begin position="118"/>
        <end position="162"/>
    </location>
</feature>
<feature type="peptide" id="PRO_0000250401" description="Antimicrobial peptide 2d" evidence="2">
    <location>
        <begin position="186"/>
        <end position="220"/>
    </location>
</feature>
<feature type="domain" description="Cupin type-1 1" evidence="3">
    <location>
        <begin position="271"/>
        <end position="410"/>
    </location>
</feature>
<feature type="domain" description="Cupin type-1 2" evidence="3">
    <location>
        <begin position="455"/>
        <end position="625"/>
    </location>
</feature>
<feature type="region of interest" description="Disordered" evidence="4">
    <location>
        <begin position="161"/>
        <end position="191"/>
    </location>
</feature>
<feature type="region of interest" description="Disordered" evidence="4">
    <location>
        <begin position="221"/>
        <end position="251"/>
    </location>
</feature>
<feature type="compositionally biased region" description="Basic and acidic residues" evidence="4">
    <location>
        <begin position="239"/>
        <end position="251"/>
    </location>
</feature>
<reference evidence="8" key="1">
    <citation type="journal article" date="1999" name="Plant J.">
        <title>A family of antimicrobial peptides is produced by processing of a 7S globulin protein in Macadamia integrifolia kernels.</title>
        <authorList>
            <person name="Marcus J.P."/>
            <person name="Green J.L."/>
            <person name="Goulter K.C."/>
            <person name="Manners J.M."/>
        </authorList>
    </citation>
    <scope>NUCLEOTIDE SEQUENCE [MRNA]</scope>
    <source>
        <tissue evidence="8">Kernel</tissue>
    </source>
</reference>
<reference key="2">
    <citation type="journal article" date="2022" name="Food Chem.">
        <title>Identification of vicilin, legumin and antimicrobial peptide 2a as macadamia nut allergens.</title>
        <authorList>
            <person name="Kabasser S."/>
            <person name="Pratap K."/>
            <person name="Kamath S."/>
            <person name="Taki A.C."/>
            <person name="Dang T."/>
            <person name="Koplin J."/>
            <person name="Perrett K."/>
            <person name="Hummel K."/>
            <person name="Radauer C."/>
            <person name="Breiteneder H."/>
            <person name="Lopata A.L."/>
            <person name="Bublin M."/>
        </authorList>
    </citation>
    <scope>IDENTIFICATION BY MASS SPECTROMETRY</scope>
    <scope>FUNCTION</scope>
    <scope>ALLERGEN</scope>
    <source>
        <tissue evidence="7">Seed</tissue>
    </source>
</reference>
<gene>
    <name evidence="6" type="primary">AMP2-2</name>
</gene>